<organism>
    <name type="scientific">Escherichia coli (strain K12)</name>
    <dbReference type="NCBI Taxonomy" id="83333"/>
    <lineage>
        <taxon>Bacteria</taxon>
        <taxon>Pseudomonadati</taxon>
        <taxon>Pseudomonadota</taxon>
        <taxon>Gammaproteobacteria</taxon>
        <taxon>Enterobacterales</taxon>
        <taxon>Enterobacteriaceae</taxon>
        <taxon>Escherichia</taxon>
    </lineage>
</organism>
<name>SGRR_ECOLI</name>
<protein>
    <recommendedName>
        <fullName>HTH-type transcriptional regulator SgrR</fullName>
    </recommendedName>
</protein>
<accession>P33595</accession>
<accession>P75638</accession>
<reference key="1">
    <citation type="journal article" date="1992" name="Nucleic Acids Res.">
        <title>Systematic sequencing of the Escherichia coli genome: analysis of the 0-2.4 min region.</title>
        <authorList>
            <person name="Yura T."/>
            <person name="Mori H."/>
            <person name="Nagai H."/>
            <person name="Nagata T."/>
            <person name="Ishihama A."/>
            <person name="Fujita N."/>
            <person name="Isono K."/>
            <person name="Mizobuchi K."/>
            <person name="Nakata A."/>
        </authorList>
    </citation>
    <scope>NUCLEOTIDE SEQUENCE [LARGE SCALE GENOMIC DNA]</scope>
    <source>
        <strain>K12</strain>
    </source>
</reference>
<reference key="2">
    <citation type="journal article" date="1997" name="Science">
        <title>The complete genome sequence of Escherichia coli K-12.</title>
        <authorList>
            <person name="Blattner F.R."/>
            <person name="Plunkett G. III"/>
            <person name="Bloch C.A."/>
            <person name="Perna N.T."/>
            <person name="Burland V."/>
            <person name="Riley M."/>
            <person name="Collado-Vides J."/>
            <person name="Glasner J.D."/>
            <person name="Rode C.K."/>
            <person name="Mayhew G.F."/>
            <person name="Gregor J."/>
            <person name="Davis N.W."/>
            <person name="Kirkpatrick H.A."/>
            <person name="Goeden M.A."/>
            <person name="Rose D.J."/>
            <person name="Mau B."/>
            <person name="Shao Y."/>
        </authorList>
    </citation>
    <scope>NUCLEOTIDE SEQUENCE [LARGE SCALE GENOMIC DNA]</scope>
    <source>
        <strain>K12 / MG1655 / ATCC 47076</strain>
    </source>
</reference>
<reference key="3">
    <citation type="journal article" date="2006" name="Mol. Syst. Biol.">
        <title>Highly accurate genome sequences of Escherichia coli K-12 strains MG1655 and W3110.</title>
        <authorList>
            <person name="Hayashi K."/>
            <person name="Morooka N."/>
            <person name="Yamamoto Y."/>
            <person name="Fujita K."/>
            <person name="Isono K."/>
            <person name="Choi S."/>
            <person name="Ohtsubo E."/>
            <person name="Baba T."/>
            <person name="Wanner B.L."/>
            <person name="Mori H."/>
            <person name="Horiuchi T."/>
        </authorList>
    </citation>
    <scope>NUCLEOTIDE SEQUENCE [LARGE SCALE GENOMIC DNA]</scope>
    <scope>SEQUENCE REVISION TO 356; 384 AND 409</scope>
    <source>
        <strain>K12 / W3110 / ATCC 27325 / DSM 5911</strain>
    </source>
</reference>
<reference key="4">
    <citation type="journal article" date="2004" name="Mol. Microbiol.">
        <title>Involvement of a novel transcriptional activator and small RNA in post-transcriptional regulation of the glucose phosphoenolpyruvate phosphotransferase system.</title>
        <authorList>
            <person name="Vanderpool C.K."/>
            <person name="Gottesman S."/>
        </authorList>
    </citation>
    <scope>FUNCTION AS A TRANSCRIPTIONAL REGULATOR</scope>
</reference>
<reference key="5">
    <citation type="journal article" date="2007" name="J. Bacteriol.">
        <title>The novel transcription factor SgrR coordinates the response to glucose-phosphate stress.</title>
        <authorList>
            <person name="Vanderpool C.K."/>
            <person name="Gottesman S."/>
        </authorList>
    </citation>
    <scope>FUNCTION AS A TRANSCRIPTIONAL REGULATOR</scope>
</reference>
<gene>
    <name type="primary">sgrR</name>
    <name type="synonym">yabN</name>
    <name type="ordered locus">b0069</name>
    <name type="ordered locus">JW0068</name>
</gene>
<evidence type="ECO:0000250" key="1"/>
<evidence type="ECO:0000255" key="2"/>
<evidence type="ECO:0000269" key="3">
    <source>
    </source>
</evidence>
<evidence type="ECO:0000269" key="4">
    <source>
    </source>
</evidence>
<proteinExistence type="evidence at protein level"/>
<sequence length="551" mass="63975">MPSARLQQQFIRLWQCCEGKSQDTTLNELAALLSCSRRHMRTLLNTMQDRGWLTWEAEVGRGKRSRLTFLYTGLALQQQRAEDLLEQDRIDQLVQLVGDKATVRQMLVSHLGRSFRQGRHILRVLYYRPLRNLLPGSALRRSETHIARQIFSSLTRINEENGELEADIAHHWQQISPLHWRFFLRPGVHFHHGRELEMDDVIASLKRINTLPLYSHIADIVSPTPWTLDIHLTQPDRWLPLLLGQVPAMILPREWETLSNFASHPIGTGPYAVIRNSTNQLKIQAFDDFFGYRALIDEVNVWVLPEIADEPAGGLMLKGPQGEEKEIESRLEEGCYYLLFDSRTHRGANQQVRDWVSYVLSPTNLVYFAEEQYQQLWFPAYGLLPRWHHARTIKSEKPAGLESLTLTFYQDHSEHRVIAGIMQQILASHQVTLKIKEIDYDQWHTGEIESDIWLNSANFTLPLDFSVFAHLCEVPLLQHCIPIDWQADAARWRNGEMNLANWCQQLVASKAMVPLLHHWLIIQGQRSMRGLRMNTLGWFDFKSAWFAPPDP</sequence>
<dbReference type="EMBL" id="U00096">
    <property type="protein sequence ID" value="AAC73180.1"/>
    <property type="molecule type" value="Genomic_DNA"/>
</dbReference>
<dbReference type="EMBL" id="AP009048">
    <property type="protein sequence ID" value="BAB96638.2"/>
    <property type="molecule type" value="Genomic_DNA"/>
</dbReference>
<dbReference type="PIR" id="E64728">
    <property type="entry name" value="E64728"/>
</dbReference>
<dbReference type="RefSeq" id="NP_414611.1">
    <property type="nucleotide sequence ID" value="NC_000913.3"/>
</dbReference>
<dbReference type="RefSeq" id="WP_001138624.1">
    <property type="nucleotide sequence ID" value="NZ_STEB01000010.1"/>
</dbReference>
<dbReference type="SMR" id="P33595"/>
<dbReference type="BioGRID" id="4263126">
    <property type="interactions" value="138"/>
</dbReference>
<dbReference type="FunCoup" id="P33595">
    <property type="interactions" value="61"/>
</dbReference>
<dbReference type="IntAct" id="P33595">
    <property type="interactions" value="2"/>
</dbReference>
<dbReference type="STRING" id="511145.b0069"/>
<dbReference type="jPOST" id="P33595"/>
<dbReference type="PaxDb" id="511145-b0069"/>
<dbReference type="EnsemblBacteria" id="AAC73180">
    <property type="protein sequence ID" value="AAC73180"/>
    <property type="gene ID" value="b0069"/>
</dbReference>
<dbReference type="GeneID" id="944788"/>
<dbReference type="KEGG" id="ecj:JW0068"/>
<dbReference type="KEGG" id="eco:b0069"/>
<dbReference type="PATRIC" id="fig|1411691.4.peg.2213"/>
<dbReference type="EchoBASE" id="EB2018"/>
<dbReference type="eggNOG" id="COG4533">
    <property type="taxonomic scope" value="Bacteria"/>
</dbReference>
<dbReference type="HOGENOM" id="CLU_017028_12_3_6"/>
<dbReference type="InParanoid" id="P33595"/>
<dbReference type="OMA" id="WLTWQAE"/>
<dbReference type="OrthoDB" id="5894719at2"/>
<dbReference type="PhylomeDB" id="P33595"/>
<dbReference type="BioCyc" id="EcoCyc:EG12094-MONOMER"/>
<dbReference type="PRO" id="PR:P33595"/>
<dbReference type="Proteomes" id="UP000000625">
    <property type="component" value="Chromosome"/>
</dbReference>
<dbReference type="GO" id="GO:1904680">
    <property type="term" value="F:peptide transmembrane transporter activity"/>
    <property type="evidence" value="ECO:0000318"/>
    <property type="project" value="GO_Central"/>
</dbReference>
<dbReference type="GO" id="GO:0000976">
    <property type="term" value="F:transcription cis-regulatory region binding"/>
    <property type="evidence" value="ECO:0000314"/>
    <property type="project" value="EcoCyc"/>
</dbReference>
<dbReference type="GO" id="GO:0045892">
    <property type="term" value="P:negative regulation of DNA-templated transcription"/>
    <property type="evidence" value="ECO:0000315"/>
    <property type="project" value="EcoCyc"/>
</dbReference>
<dbReference type="GO" id="GO:0015833">
    <property type="term" value="P:peptide transport"/>
    <property type="evidence" value="ECO:0000318"/>
    <property type="project" value="GO_Central"/>
</dbReference>
<dbReference type="GO" id="GO:0045893">
    <property type="term" value="P:positive regulation of DNA-templated transcription"/>
    <property type="evidence" value="ECO:0000315"/>
    <property type="project" value="EcoCyc"/>
</dbReference>
<dbReference type="CDD" id="cd08507">
    <property type="entry name" value="PBP2_SgrR_like"/>
    <property type="match status" value="1"/>
</dbReference>
<dbReference type="FunFam" id="3.40.190.10:FF:000070">
    <property type="entry name" value="HTH-type transcriptional regulator SgrR"/>
    <property type="match status" value="1"/>
</dbReference>
<dbReference type="Gene3D" id="3.40.190.10">
    <property type="entry name" value="Periplasmic binding protein-like II"/>
    <property type="match status" value="1"/>
</dbReference>
<dbReference type="HAMAP" id="MF_01449">
    <property type="entry name" value="HTH_type_SgrR"/>
    <property type="match status" value="1"/>
</dbReference>
<dbReference type="InterPro" id="IPR039424">
    <property type="entry name" value="SBP_5"/>
</dbReference>
<dbReference type="InterPro" id="IPR000914">
    <property type="entry name" value="SBP_5_dom"/>
</dbReference>
<dbReference type="InterPro" id="IPR025370">
    <property type="entry name" value="SgrR_HTH_N"/>
</dbReference>
<dbReference type="InterPro" id="IPR023767">
    <property type="entry name" value="Tscrpt_reg_SgrR"/>
</dbReference>
<dbReference type="NCBIfam" id="NF010149">
    <property type="entry name" value="PRK13626.1"/>
    <property type="match status" value="1"/>
</dbReference>
<dbReference type="PANTHER" id="PTHR30290:SF72">
    <property type="entry name" value="HTH-TYPE TRANSCRIPTIONAL REGULATOR SGRR"/>
    <property type="match status" value="1"/>
</dbReference>
<dbReference type="PANTHER" id="PTHR30290">
    <property type="entry name" value="PERIPLASMIC BINDING COMPONENT OF ABC TRANSPORTER"/>
    <property type="match status" value="1"/>
</dbReference>
<dbReference type="Pfam" id="PF00496">
    <property type="entry name" value="SBP_bac_5"/>
    <property type="match status" value="1"/>
</dbReference>
<dbReference type="Pfam" id="PF12793">
    <property type="entry name" value="SgrR_N"/>
    <property type="match status" value="1"/>
</dbReference>
<dbReference type="SUPFAM" id="SSF53850">
    <property type="entry name" value="Periplasmic binding protein-like II"/>
    <property type="match status" value="1"/>
</dbReference>
<keyword id="KW-0010">Activator</keyword>
<keyword id="KW-0238">DNA-binding</keyword>
<keyword id="KW-1185">Reference proteome</keyword>
<keyword id="KW-0678">Repressor</keyword>
<keyword id="KW-0804">Transcription</keyword>
<keyword id="KW-0805">Transcription regulation</keyword>
<comment type="function">
    <text evidence="3 4">Activates the small RNA gene sgrS under glucose-phosphate stress conditions as well as yfdZ. Represses its own transcription under both stress and non-stress conditions; this repression likely provides one measure of control over sgrR at the level of synthesis. Might act as a sensor of the intracellular accumulation of phosphoglucose by binding these molecules in its C-terminal solute-binding domain.</text>
</comment>
<comment type="miscellaneous">
    <text>Binds specifically to sgrS promoter in vitro.</text>
</comment>
<feature type="chain" id="PRO_0000168522" description="HTH-type transcriptional regulator SgrR">
    <location>
        <begin position="1"/>
        <end position="551"/>
    </location>
</feature>
<feature type="domain" description="HTH marR-type">
    <location>
        <begin position="1"/>
        <end position="116"/>
    </location>
</feature>
<feature type="DNA-binding region" description="H-T-H motif" evidence="1">
    <location>
        <begin position="26"/>
        <end position="49"/>
    </location>
</feature>
<feature type="region of interest" description="Solute-binding" evidence="2">
    <location>
        <begin position="163"/>
        <end position="492"/>
    </location>
</feature>